<dbReference type="EC" id="2.3.1.15"/>
<dbReference type="EMBL" id="AF013293">
    <property type="protein sequence ID" value="AAB62826.1"/>
    <property type="status" value="ALT_SEQ"/>
    <property type="molecule type" value="Genomic_DNA"/>
</dbReference>
<dbReference type="EMBL" id="AF013293">
    <property type="protein sequence ID" value="AAB62827.1"/>
    <property type="status" value="ALT_SEQ"/>
    <property type="molecule type" value="Genomic_DNA"/>
</dbReference>
<dbReference type="EMBL" id="AF195115">
    <property type="protein sequence ID" value="AAF02784.1"/>
    <property type="status" value="ALT_SEQ"/>
    <property type="molecule type" value="Genomic_DNA"/>
</dbReference>
<dbReference type="EMBL" id="AF195115">
    <property type="protein sequence ID" value="AAF02785.1"/>
    <property type="status" value="ALT_SEQ"/>
    <property type="molecule type" value="Genomic_DNA"/>
</dbReference>
<dbReference type="EMBL" id="AL161471">
    <property type="protein sequence ID" value="CAB80798.1"/>
    <property type="status" value="ALT_SEQ"/>
    <property type="molecule type" value="Genomic_DNA"/>
</dbReference>
<dbReference type="EMBL" id="AL161471">
    <property type="protein sequence ID" value="CAB80799.1"/>
    <property type="status" value="ALT_SEQ"/>
    <property type="molecule type" value="Genomic_DNA"/>
</dbReference>
<dbReference type="EMBL" id="CP002687">
    <property type="protein sequence ID" value="AEE81873.1"/>
    <property type="molecule type" value="Genomic_DNA"/>
</dbReference>
<dbReference type="EMBL" id="BT015813">
    <property type="protein sequence ID" value="AAU94376.1"/>
    <property type="molecule type" value="mRNA"/>
</dbReference>
<dbReference type="EMBL" id="AK228870">
    <property type="protein sequence ID" value="BAF00762.1"/>
    <property type="molecule type" value="mRNA"/>
</dbReference>
<dbReference type="PIR" id="T01530">
    <property type="entry name" value="T01530"/>
</dbReference>
<dbReference type="PIR" id="T01531">
    <property type="entry name" value="T01531"/>
</dbReference>
<dbReference type="RefSeq" id="NP_191950.2">
    <property type="nucleotide sequence ID" value="NM_116264.6"/>
</dbReference>
<dbReference type="SMR" id="Q5XF03"/>
<dbReference type="BioGRID" id="13429">
    <property type="interactions" value="4"/>
</dbReference>
<dbReference type="FunCoup" id="Q5XF03">
    <property type="interactions" value="62"/>
</dbReference>
<dbReference type="IntAct" id="Q5XF03">
    <property type="interactions" value="2"/>
</dbReference>
<dbReference type="STRING" id="3702.Q5XF03"/>
<dbReference type="iPTMnet" id="Q5XF03"/>
<dbReference type="PaxDb" id="3702-AT4G00400.1"/>
<dbReference type="ProteomicsDB" id="247026"/>
<dbReference type="EnsemblPlants" id="AT4G00400.1">
    <property type="protein sequence ID" value="AT4G00400.1"/>
    <property type="gene ID" value="AT4G00400"/>
</dbReference>
<dbReference type="GeneID" id="828140"/>
<dbReference type="Gramene" id="AT4G00400.1">
    <property type="protein sequence ID" value="AT4G00400.1"/>
    <property type="gene ID" value="AT4G00400"/>
</dbReference>
<dbReference type="KEGG" id="ath:AT4G00400"/>
<dbReference type="Araport" id="AT4G00400"/>
<dbReference type="TAIR" id="AT4G00400">
    <property type="gene designation" value="GPAT8"/>
</dbReference>
<dbReference type="eggNOG" id="ENOG502RK50">
    <property type="taxonomic scope" value="Eukaryota"/>
</dbReference>
<dbReference type="HOGENOM" id="CLU_028504_1_0_1"/>
<dbReference type="InParanoid" id="Q5XF03"/>
<dbReference type="OMA" id="YMVHATK"/>
<dbReference type="OrthoDB" id="1854593at2759"/>
<dbReference type="PhylomeDB" id="Q5XF03"/>
<dbReference type="BioCyc" id="MetaCyc:AT4G00400-MONOMER"/>
<dbReference type="BRENDA" id="2.3.1.15">
    <property type="organism ID" value="399"/>
</dbReference>
<dbReference type="BRENDA" id="2.3.1.198">
    <property type="organism ID" value="399"/>
</dbReference>
<dbReference type="UniPathway" id="UPA00557">
    <property type="reaction ID" value="UER00612"/>
</dbReference>
<dbReference type="PRO" id="PR:Q5XF03"/>
<dbReference type="Proteomes" id="UP000006548">
    <property type="component" value="Chromosome 4"/>
</dbReference>
<dbReference type="ExpressionAtlas" id="Q5XF03">
    <property type="expression patterns" value="baseline and differential"/>
</dbReference>
<dbReference type="GO" id="GO:0005783">
    <property type="term" value="C:endoplasmic reticulum"/>
    <property type="evidence" value="ECO:0000314"/>
    <property type="project" value="TAIR"/>
</dbReference>
<dbReference type="GO" id="GO:0016020">
    <property type="term" value="C:membrane"/>
    <property type="evidence" value="ECO:0000318"/>
    <property type="project" value="GO_Central"/>
</dbReference>
<dbReference type="GO" id="GO:0090447">
    <property type="term" value="F:glycerol-3-phosphate 2-O-acyltransferase activity"/>
    <property type="evidence" value="ECO:0000314"/>
    <property type="project" value="TAIR"/>
</dbReference>
<dbReference type="GO" id="GO:0004366">
    <property type="term" value="F:glycerol-3-phosphate O-acyltransferase activity"/>
    <property type="evidence" value="ECO:0007669"/>
    <property type="project" value="UniProtKB-EC"/>
</dbReference>
<dbReference type="GO" id="GO:0016791">
    <property type="term" value="F:phosphatase activity"/>
    <property type="evidence" value="ECO:0000314"/>
    <property type="project" value="TAIR"/>
</dbReference>
<dbReference type="GO" id="GO:0016024">
    <property type="term" value="P:CDP-diacylglycerol biosynthetic process"/>
    <property type="evidence" value="ECO:0007669"/>
    <property type="project" value="UniProtKB-UniPathway"/>
</dbReference>
<dbReference type="GO" id="GO:0010143">
    <property type="term" value="P:cutin biosynthetic process"/>
    <property type="evidence" value="ECO:0000315"/>
    <property type="project" value="TAIR"/>
</dbReference>
<dbReference type="CDD" id="cd06551">
    <property type="entry name" value="LPLAT"/>
    <property type="match status" value="1"/>
</dbReference>
<dbReference type="FunFam" id="3.40.50.1000:FF:000134">
    <property type="entry name" value="Glycerol-3-phosphate 2-O-acyltransferase 6"/>
    <property type="match status" value="1"/>
</dbReference>
<dbReference type="Gene3D" id="3.40.50.1000">
    <property type="entry name" value="HAD superfamily/HAD-like"/>
    <property type="match status" value="1"/>
</dbReference>
<dbReference type="InterPro" id="IPR056462">
    <property type="entry name" value="HAD_RAM2/GPAT1-8"/>
</dbReference>
<dbReference type="InterPro" id="IPR023214">
    <property type="entry name" value="HAD_sf"/>
</dbReference>
<dbReference type="InterPro" id="IPR002123">
    <property type="entry name" value="Plipid/glycerol_acylTrfase"/>
</dbReference>
<dbReference type="PANTHER" id="PTHR15486">
    <property type="entry name" value="ANCIENT UBIQUITOUS PROTEIN"/>
    <property type="match status" value="1"/>
</dbReference>
<dbReference type="PANTHER" id="PTHR15486:SF70">
    <property type="entry name" value="GLYCEROL-3-PHOSPHATE ACYLTRANSFERASE 8-RELATED"/>
    <property type="match status" value="1"/>
</dbReference>
<dbReference type="Pfam" id="PF01553">
    <property type="entry name" value="Acyltransferase"/>
    <property type="match status" value="1"/>
</dbReference>
<dbReference type="Pfam" id="PF23270">
    <property type="entry name" value="HAD_RAM2_N"/>
    <property type="match status" value="1"/>
</dbReference>
<dbReference type="SMART" id="SM00563">
    <property type="entry name" value="PlsC"/>
    <property type="match status" value="1"/>
</dbReference>
<dbReference type="SUPFAM" id="SSF69593">
    <property type="entry name" value="Glycerol-3-phosphate (1)-acyltransferase"/>
    <property type="match status" value="1"/>
</dbReference>
<keyword id="KW-0012">Acyltransferase</keyword>
<keyword id="KW-0444">Lipid biosynthesis</keyword>
<keyword id="KW-0443">Lipid metabolism</keyword>
<keyword id="KW-0472">Membrane</keyword>
<keyword id="KW-0594">Phospholipid biosynthesis</keyword>
<keyword id="KW-1208">Phospholipid metabolism</keyword>
<keyword id="KW-1185">Reference proteome</keyword>
<keyword id="KW-0808">Transferase</keyword>
<keyword id="KW-0812">Transmembrane</keyword>
<keyword id="KW-1133">Transmembrane helix</keyword>
<proteinExistence type="evidence at transcript level"/>
<evidence type="ECO:0000250" key="1"/>
<evidence type="ECO:0000255" key="2"/>
<evidence type="ECO:0000305" key="3"/>
<accession>Q5XF03</accession>
<accession>O23061</accession>
<accession>O23062</accession>
<accession>Q0WQ37</accession>
<gene>
    <name type="primary">GPAT8</name>
    <name type="ordered locus">At4g00400/At4g00410</name>
    <name type="ORF">F5I10.4/F5I10.5</name>
</gene>
<comment type="function">
    <text evidence="1">Esterifies acyl-group from acyl-ACP to the sn-1 position of glycerol-3-phosphate, an essential step in glycerolipid biosynthesis.</text>
</comment>
<comment type="catalytic activity">
    <reaction>
        <text>sn-glycerol 3-phosphate + an acyl-CoA = a 1-acyl-sn-glycero-3-phosphate + CoA</text>
        <dbReference type="Rhea" id="RHEA:15325"/>
        <dbReference type="ChEBI" id="CHEBI:57287"/>
        <dbReference type="ChEBI" id="CHEBI:57597"/>
        <dbReference type="ChEBI" id="CHEBI:57970"/>
        <dbReference type="ChEBI" id="CHEBI:58342"/>
        <dbReference type="EC" id="2.3.1.15"/>
    </reaction>
</comment>
<comment type="pathway">
    <text>Phospholipid metabolism; CDP-diacylglycerol biosynthesis; CDP-diacylglycerol from sn-glycerol 3-phosphate: step 1/3.</text>
</comment>
<comment type="subcellular location">
    <subcellularLocation>
        <location evidence="3">Membrane</location>
        <topology evidence="3">Multi-pass membrane protein</topology>
    </subcellularLocation>
</comment>
<comment type="domain">
    <text evidence="1">The HXXXXD motif is essential for acyltransferase activity and may constitute the binding site for the phosphate moiety of the glycerol-3-phosphate.</text>
</comment>
<comment type="similarity">
    <text evidence="3">Belongs to the GPAT/DAPAT family.</text>
</comment>
<comment type="sequence caution" evidence="3">
    <conflict type="erroneous gene model prediction">
        <sequence resource="EMBL-CDS" id="AAB62826"/>
    </conflict>
    <text>Was originally thought to correspond to two different genes At4g00400 and At4g00410.</text>
</comment>
<comment type="sequence caution" evidence="3">
    <conflict type="erroneous gene model prediction">
        <sequence resource="EMBL-CDS" id="AAB62827"/>
    </conflict>
    <text>Was originally thought to correspond to two different genes At4g00400 and At4g00410.</text>
</comment>
<comment type="sequence caution" evidence="3">
    <conflict type="erroneous gene model prediction">
        <sequence resource="EMBL-CDS" id="AAF02784"/>
    </conflict>
    <text>Was originally thought to correspond to two different genes At4g00400 and At4g00410.</text>
</comment>
<comment type="sequence caution" evidence="3">
    <conflict type="erroneous gene model prediction">
        <sequence resource="EMBL-CDS" id="AAF02785"/>
    </conflict>
    <text>Was originally thought to correspond to two different genes At4g00400 and At4g00410.</text>
</comment>
<comment type="sequence caution" evidence="3">
    <conflict type="erroneous gene model prediction">
        <sequence resource="EMBL-CDS" id="CAB80798"/>
    </conflict>
    <text>Was originally thought to correspond to two different genes At4g00400 and At4g00410.</text>
</comment>
<comment type="sequence caution" evidence="3">
    <conflict type="erroneous gene model prediction">
        <sequence resource="EMBL-CDS" id="CAB80799"/>
    </conflict>
    <text>Was originally thought to correspond to two different genes At4g00400 and At4g00410.</text>
</comment>
<protein>
    <recommendedName>
        <fullName>Probable glycerol-3-phosphate acyltransferase 8</fullName>
        <ecNumber>2.3.1.15</ecNumber>
    </recommendedName>
</protein>
<reference key="1">
    <citation type="journal article" date="1999" name="Nature">
        <title>Sequence and analysis of chromosome 4 of the plant Arabidopsis thaliana.</title>
        <authorList>
            <person name="Mayer K.F.X."/>
            <person name="Schueller C."/>
            <person name="Wambutt R."/>
            <person name="Murphy G."/>
            <person name="Volckaert G."/>
            <person name="Pohl T."/>
            <person name="Duesterhoeft A."/>
            <person name="Stiekema W."/>
            <person name="Entian K.-D."/>
            <person name="Terryn N."/>
            <person name="Harris B."/>
            <person name="Ansorge W."/>
            <person name="Brandt P."/>
            <person name="Grivell L.A."/>
            <person name="Rieger M."/>
            <person name="Weichselgartner M."/>
            <person name="de Simone V."/>
            <person name="Obermaier B."/>
            <person name="Mache R."/>
            <person name="Mueller M."/>
            <person name="Kreis M."/>
            <person name="Delseny M."/>
            <person name="Puigdomenech P."/>
            <person name="Watson M."/>
            <person name="Schmidtheini T."/>
            <person name="Reichert B."/>
            <person name="Portetelle D."/>
            <person name="Perez-Alonso M."/>
            <person name="Boutry M."/>
            <person name="Bancroft I."/>
            <person name="Vos P."/>
            <person name="Hoheisel J."/>
            <person name="Zimmermann W."/>
            <person name="Wedler H."/>
            <person name="Ridley P."/>
            <person name="Langham S.-A."/>
            <person name="McCullagh B."/>
            <person name="Bilham L."/>
            <person name="Robben J."/>
            <person name="van der Schueren J."/>
            <person name="Grymonprez B."/>
            <person name="Chuang Y.-J."/>
            <person name="Vandenbussche F."/>
            <person name="Braeken M."/>
            <person name="Weltjens I."/>
            <person name="Voet M."/>
            <person name="Bastiaens I."/>
            <person name="Aert R."/>
            <person name="Defoor E."/>
            <person name="Weitzenegger T."/>
            <person name="Bothe G."/>
            <person name="Ramsperger U."/>
            <person name="Hilbert H."/>
            <person name="Braun M."/>
            <person name="Holzer E."/>
            <person name="Brandt A."/>
            <person name="Peters S."/>
            <person name="van Staveren M."/>
            <person name="Dirkse W."/>
            <person name="Mooijman P."/>
            <person name="Klein Lankhorst R."/>
            <person name="Rose M."/>
            <person name="Hauf J."/>
            <person name="Koetter P."/>
            <person name="Berneiser S."/>
            <person name="Hempel S."/>
            <person name="Feldpausch M."/>
            <person name="Lamberth S."/>
            <person name="Van den Daele H."/>
            <person name="De Keyser A."/>
            <person name="Buysshaert C."/>
            <person name="Gielen J."/>
            <person name="Villarroel R."/>
            <person name="De Clercq R."/>
            <person name="van Montagu M."/>
            <person name="Rogers J."/>
            <person name="Cronin A."/>
            <person name="Quail M.A."/>
            <person name="Bray-Allen S."/>
            <person name="Clark L."/>
            <person name="Doggett J."/>
            <person name="Hall S."/>
            <person name="Kay M."/>
            <person name="Lennard N."/>
            <person name="McLay K."/>
            <person name="Mayes R."/>
            <person name="Pettett A."/>
            <person name="Rajandream M.A."/>
            <person name="Lyne M."/>
            <person name="Benes V."/>
            <person name="Rechmann S."/>
            <person name="Borkova D."/>
            <person name="Bloecker H."/>
            <person name="Scharfe M."/>
            <person name="Grimm M."/>
            <person name="Loehnert T.-H."/>
            <person name="Dose S."/>
            <person name="de Haan M."/>
            <person name="Maarse A.C."/>
            <person name="Schaefer M."/>
            <person name="Mueller-Auer S."/>
            <person name="Gabel C."/>
            <person name="Fuchs M."/>
            <person name="Fartmann B."/>
            <person name="Granderath K."/>
            <person name="Dauner D."/>
            <person name="Herzl A."/>
            <person name="Neumann S."/>
            <person name="Argiriou A."/>
            <person name="Vitale D."/>
            <person name="Liguori R."/>
            <person name="Piravandi E."/>
            <person name="Massenet O."/>
            <person name="Quigley F."/>
            <person name="Clabauld G."/>
            <person name="Muendlein A."/>
            <person name="Felber R."/>
            <person name="Schnabl S."/>
            <person name="Hiller R."/>
            <person name="Schmidt W."/>
            <person name="Lecharny A."/>
            <person name="Aubourg S."/>
            <person name="Chefdor F."/>
            <person name="Cooke R."/>
            <person name="Berger C."/>
            <person name="Monfort A."/>
            <person name="Casacuberta E."/>
            <person name="Gibbons T."/>
            <person name="Weber N."/>
            <person name="Vandenbol M."/>
            <person name="Bargues M."/>
            <person name="Terol J."/>
            <person name="Torres A."/>
            <person name="Perez-Perez A."/>
            <person name="Purnelle B."/>
            <person name="Bent E."/>
            <person name="Johnson S."/>
            <person name="Tacon D."/>
            <person name="Jesse T."/>
            <person name="Heijnen L."/>
            <person name="Schwarz S."/>
            <person name="Scholler P."/>
            <person name="Heber S."/>
            <person name="Francs P."/>
            <person name="Bielke C."/>
            <person name="Frishman D."/>
            <person name="Haase D."/>
            <person name="Lemcke K."/>
            <person name="Mewes H.-W."/>
            <person name="Stocker S."/>
            <person name="Zaccaria P."/>
            <person name="Bevan M."/>
            <person name="Wilson R.K."/>
            <person name="de la Bastide M."/>
            <person name="Habermann K."/>
            <person name="Parnell L."/>
            <person name="Dedhia N."/>
            <person name="Gnoj L."/>
            <person name="Schutz K."/>
            <person name="Huang E."/>
            <person name="Spiegel L."/>
            <person name="Sekhon M."/>
            <person name="Murray J."/>
            <person name="Sheet P."/>
            <person name="Cordes M."/>
            <person name="Abu-Threideh J."/>
            <person name="Stoneking T."/>
            <person name="Kalicki J."/>
            <person name="Graves T."/>
            <person name="Harmon G."/>
            <person name="Edwards J."/>
            <person name="Latreille P."/>
            <person name="Courtney L."/>
            <person name="Cloud J."/>
            <person name="Abbott A."/>
            <person name="Scott K."/>
            <person name="Johnson D."/>
            <person name="Minx P."/>
            <person name="Bentley D."/>
            <person name="Fulton B."/>
            <person name="Miller N."/>
            <person name="Greco T."/>
            <person name="Kemp K."/>
            <person name="Kramer J."/>
            <person name="Fulton L."/>
            <person name="Mardis E."/>
            <person name="Dante M."/>
            <person name="Pepin K."/>
            <person name="Hillier L.W."/>
            <person name="Nelson J."/>
            <person name="Spieth J."/>
            <person name="Ryan E."/>
            <person name="Andrews S."/>
            <person name="Geisel C."/>
            <person name="Layman D."/>
            <person name="Du H."/>
            <person name="Ali J."/>
            <person name="Berghoff A."/>
            <person name="Jones K."/>
            <person name="Drone K."/>
            <person name="Cotton M."/>
            <person name="Joshu C."/>
            <person name="Antonoiu B."/>
            <person name="Zidanic M."/>
            <person name="Strong C."/>
            <person name="Sun H."/>
            <person name="Lamar B."/>
            <person name="Yordan C."/>
            <person name="Ma P."/>
            <person name="Zhong J."/>
            <person name="Preston R."/>
            <person name="Vil D."/>
            <person name="Shekher M."/>
            <person name="Matero A."/>
            <person name="Shah R."/>
            <person name="Swaby I.K."/>
            <person name="O'Shaughnessy A."/>
            <person name="Rodriguez M."/>
            <person name="Hoffman J."/>
            <person name="Till S."/>
            <person name="Granat S."/>
            <person name="Shohdy N."/>
            <person name="Hasegawa A."/>
            <person name="Hameed A."/>
            <person name="Lodhi M."/>
            <person name="Johnson A."/>
            <person name="Chen E."/>
            <person name="Marra M.A."/>
            <person name="Martienssen R."/>
            <person name="McCombie W.R."/>
        </authorList>
    </citation>
    <scope>NUCLEOTIDE SEQUENCE [LARGE SCALE GENOMIC DNA]</scope>
    <source>
        <strain>cv. Columbia</strain>
    </source>
</reference>
<reference key="2">
    <citation type="journal article" date="2017" name="Plant J.">
        <title>Araport11: a complete reannotation of the Arabidopsis thaliana reference genome.</title>
        <authorList>
            <person name="Cheng C.Y."/>
            <person name="Krishnakumar V."/>
            <person name="Chan A.P."/>
            <person name="Thibaud-Nissen F."/>
            <person name="Schobel S."/>
            <person name="Town C.D."/>
        </authorList>
    </citation>
    <scope>GENOME REANNOTATION</scope>
    <source>
        <strain>cv. Columbia</strain>
    </source>
</reference>
<reference key="3">
    <citation type="submission" date="2004-10" db="EMBL/GenBank/DDBJ databases">
        <title>Arabidopsis ORF clones.</title>
        <authorList>
            <person name="Cheuk R.F."/>
            <person name="Chen H."/>
            <person name="Kim C.J."/>
            <person name="Shinn P."/>
            <person name="Ecker J.R."/>
        </authorList>
    </citation>
    <scope>NUCLEOTIDE SEQUENCE [LARGE SCALE MRNA]</scope>
    <source>
        <strain>cv. Columbia</strain>
    </source>
</reference>
<reference key="4">
    <citation type="submission" date="2006-07" db="EMBL/GenBank/DDBJ databases">
        <title>Large-scale analysis of RIKEN Arabidopsis full-length (RAFL) cDNAs.</title>
        <authorList>
            <person name="Totoki Y."/>
            <person name="Seki M."/>
            <person name="Ishida J."/>
            <person name="Nakajima M."/>
            <person name="Enju A."/>
            <person name="Kamiya A."/>
            <person name="Narusaka M."/>
            <person name="Shin-i T."/>
            <person name="Nakagawa M."/>
            <person name="Sakamoto N."/>
            <person name="Oishi K."/>
            <person name="Kohara Y."/>
            <person name="Kobayashi M."/>
            <person name="Toyoda A."/>
            <person name="Sakaki Y."/>
            <person name="Sakurai T."/>
            <person name="Iida K."/>
            <person name="Akiyama K."/>
            <person name="Satou M."/>
            <person name="Toyoda T."/>
            <person name="Konagaya A."/>
            <person name="Carninci P."/>
            <person name="Kawai J."/>
            <person name="Hayashizaki Y."/>
            <person name="Shinozaki K."/>
        </authorList>
    </citation>
    <scope>NUCLEOTIDE SEQUENCE [LARGE SCALE MRNA]</scope>
    <source>
        <strain>cv. Columbia</strain>
    </source>
</reference>
<organism>
    <name type="scientific">Arabidopsis thaliana</name>
    <name type="common">Mouse-ear cress</name>
    <dbReference type="NCBI Taxonomy" id="3702"/>
    <lineage>
        <taxon>Eukaryota</taxon>
        <taxon>Viridiplantae</taxon>
        <taxon>Streptophyta</taxon>
        <taxon>Embryophyta</taxon>
        <taxon>Tracheophyta</taxon>
        <taxon>Spermatophyta</taxon>
        <taxon>Magnoliopsida</taxon>
        <taxon>eudicotyledons</taxon>
        <taxon>Gunneridae</taxon>
        <taxon>Pentapetalae</taxon>
        <taxon>rosids</taxon>
        <taxon>malvids</taxon>
        <taxon>Brassicales</taxon>
        <taxon>Brassicaceae</taxon>
        <taxon>Camelineae</taxon>
        <taxon>Arabidopsis</taxon>
    </lineage>
</organism>
<feature type="chain" id="PRO_0000195256" description="Probable glycerol-3-phosphate acyltransferase 8">
    <location>
        <begin position="1"/>
        <end position="500"/>
    </location>
</feature>
<feature type="transmembrane region" description="Helical" evidence="2">
    <location>
        <begin position="42"/>
        <end position="62"/>
    </location>
</feature>
<feature type="transmembrane region" description="Helical" evidence="2">
    <location>
        <begin position="64"/>
        <end position="84"/>
    </location>
</feature>
<feature type="transmembrane region" description="Helical" evidence="2">
    <location>
        <begin position="243"/>
        <end position="263"/>
    </location>
</feature>
<feature type="short sequence motif" description="HXXXXD motif">
    <location>
        <begin position="310"/>
        <end position="315"/>
    </location>
</feature>
<feature type="sequence conflict" description="In Ref. 4; BAF00762." evidence="3" ref="4">
    <original>F</original>
    <variation>S</variation>
    <location>
        <position position="386"/>
    </location>
</feature>
<sequence>MSPEKKSQNFPPITECRDGEYDSIAADLDGTLLLSRSSFPYFMLVAVEAGSLLRGLILLLSLPFVIISYLFVSESLGIQILIFISFAGLKIRDIELVSRAVLPRFYAADVRKDSFEVFDKCKRKVVVTANPIVMVEAFVKDYLGGDKVLGTEIEVNPKTNRATGFVKKPGVLVGDLKRLAILKEFGNESPDLGLGDRTSDHDFMSLCKKGYMVHATKSATTIPKERLKNRIVFHDGRLAQRPTPLNAIITYLWLPFGFILSIIRVYFNLPLPERFVRYTYEMLGIHLTIRGHRPPPPSPGTLGNLYVLNHRTALDPIIVAIALGRKICCVTYSVSRLSLMLSPIPAVALTRDRATDAANMRKLLEKGDLVICPEGTTCREEYLLRFSALFAELSDRIVPVAMNCKQGMFNGTTVRGVKFWDPYFFFMNPRPSYEATFLDRLPEEMTVNGGGKTPIEVANYVQKVIGAVLGFECTELTRKDKYLLLGGNDGKVESINNTKK</sequence>
<name>GPAT8_ARATH</name>